<comment type="catalytic activity">
    <reaction evidence="1">
        <text>urea + 2 H2O + H(+) = hydrogencarbonate + 2 NH4(+)</text>
        <dbReference type="Rhea" id="RHEA:20557"/>
        <dbReference type="ChEBI" id="CHEBI:15377"/>
        <dbReference type="ChEBI" id="CHEBI:15378"/>
        <dbReference type="ChEBI" id="CHEBI:16199"/>
        <dbReference type="ChEBI" id="CHEBI:17544"/>
        <dbReference type="ChEBI" id="CHEBI:28938"/>
        <dbReference type="EC" id="3.5.1.5"/>
    </reaction>
</comment>
<comment type="pathway">
    <text evidence="1">Nitrogen metabolism; urea degradation; CO(2) and NH(3) from urea (urease route): step 1/1.</text>
</comment>
<comment type="subunit">
    <text evidence="1">Heterotrimer of UreA (gamma), UreB (beta) and UreC (alpha) subunits. Three heterotrimers associate to form the active enzyme.</text>
</comment>
<comment type="subcellular location">
    <subcellularLocation>
        <location evidence="1">Cytoplasm</location>
    </subcellularLocation>
</comment>
<comment type="similarity">
    <text evidence="1">Belongs to the urease beta subunit family.</text>
</comment>
<proteinExistence type="inferred from homology"/>
<feature type="chain" id="PRO_0000234228" description="Urease subunit beta">
    <location>
        <begin position="1"/>
        <end position="103"/>
    </location>
</feature>
<evidence type="ECO:0000255" key="1">
    <source>
        <dbReference type="HAMAP-Rule" id="MF_01954"/>
    </source>
</evidence>
<protein>
    <recommendedName>
        <fullName evidence="1">Urease subunit beta</fullName>
        <ecNumber evidence="1">3.5.1.5</ecNumber>
    </recommendedName>
    <alternativeName>
        <fullName evidence="1">Urea amidohydrolase subunit beta</fullName>
    </alternativeName>
</protein>
<accession>Q7VRS5</accession>
<keyword id="KW-0963">Cytoplasm</keyword>
<keyword id="KW-0378">Hydrolase</keyword>
<keyword id="KW-1185">Reference proteome</keyword>
<reference key="1">
    <citation type="journal article" date="2003" name="Proc. Natl. Acad. Sci. U.S.A.">
        <title>The genome sequence of Blochmannia floridanus: comparative analysis of reduced genomes.</title>
        <authorList>
            <person name="Gil R."/>
            <person name="Silva F.J."/>
            <person name="Zientz E."/>
            <person name="Delmotte F."/>
            <person name="Gonzalez-Candelas F."/>
            <person name="Latorre A."/>
            <person name="Rausell C."/>
            <person name="Kamerbeek J."/>
            <person name="Gadau J."/>
            <person name="Hoelldobler B."/>
            <person name="van Ham R.C.H.J."/>
            <person name="Gross R."/>
            <person name="Moya A."/>
        </authorList>
    </citation>
    <scope>NUCLEOTIDE SEQUENCE [LARGE SCALE GENOMIC DNA]</scope>
</reference>
<dbReference type="EC" id="3.5.1.5" evidence="1"/>
<dbReference type="EMBL" id="BX248583">
    <property type="protein sequence ID" value="CAD83210.1"/>
    <property type="molecule type" value="Genomic_DNA"/>
</dbReference>
<dbReference type="SMR" id="Q7VRS5"/>
<dbReference type="STRING" id="203907.Bfl524"/>
<dbReference type="KEGG" id="bfl:Bfl524"/>
<dbReference type="eggNOG" id="COG0832">
    <property type="taxonomic scope" value="Bacteria"/>
</dbReference>
<dbReference type="HOGENOM" id="CLU_129707_1_1_6"/>
<dbReference type="OrthoDB" id="9797217at2"/>
<dbReference type="UniPathway" id="UPA00258">
    <property type="reaction ID" value="UER00370"/>
</dbReference>
<dbReference type="Proteomes" id="UP000002192">
    <property type="component" value="Chromosome"/>
</dbReference>
<dbReference type="GO" id="GO:0035550">
    <property type="term" value="C:urease complex"/>
    <property type="evidence" value="ECO:0007669"/>
    <property type="project" value="InterPro"/>
</dbReference>
<dbReference type="GO" id="GO:0009039">
    <property type="term" value="F:urease activity"/>
    <property type="evidence" value="ECO:0007669"/>
    <property type="project" value="UniProtKB-UniRule"/>
</dbReference>
<dbReference type="GO" id="GO:0043419">
    <property type="term" value="P:urea catabolic process"/>
    <property type="evidence" value="ECO:0007669"/>
    <property type="project" value="UniProtKB-UniRule"/>
</dbReference>
<dbReference type="CDD" id="cd00407">
    <property type="entry name" value="Urease_beta"/>
    <property type="match status" value="1"/>
</dbReference>
<dbReference type="Gene3D" id="2.10.150.10">
    <property type="entry name" value="Urease, beta subunit"/>
    <property type="match status" value="1"/>
</dbReference>
<dbReference type="HAMAP" id="MF_01954">
    <property type="entry name" value="Urease_beta"/>
    <property type="match status" value="1"/>
</dbReference>
<dbReference type="InterPro" id="IPR002019">
    <property type="entry name" value="Urease_beta-like"/>
</dbReference>
<dbReference type="InterPro" id="IPR036461">
    <property type="entry name" value="Urease_betasu_sf"/>
</dbReference>
<dbReference type="InterPro" id="IPR050069">
    <property type="entry name" value="Urease_subunit"/>
</dbReference>
<dbReference type="NCBIfam" id="NF009682">
    <property type="entry name" value="PRK13203.1"/>
    <property type="match status" value="1"/>
</dbReference>
<dbReference type="NCBIfam" id="TIGR00192">
    <property type="entry name" value="urease_beta"/>
    <property type="match status" value="1"/>
</dbReference>
<dbReference type="PANTHER" id="PTHR33569">
    <property type="entry name" value="UREASE"/>
    <property type="match status" value="1"/>
</dbReference>
<dbReference type="PANTHER" id="PTHR33569:SF1">
    <property type="entry name" value="UREASE"/>
    <property type="match status" value="1"/>
</dbReference>
<dbReference type="Pfam" id="PF00699">
    <property type="entry name" value="Urease_beta"/>
    <property type="match status" value="1"/>
</dbReference>
<dbReference type="SUPFAM" id="SSF51278">
    <property type="entry name" value="Urease, beta-subunit"/>
    <property type="match status" value="1"/>
</dbReference>
<gene>
    <name evidence="1" type="primary">ureB</name>
    <name type="ordered locus">Bfl524</name>
</gene>
<organism>
    <name type="scientific">Blochmanniella floridana</name>
    <dbReference type="NCBI Taxonomy" id="203907"/>
    <lineage>
        <taxon>Bacteria</taxon>
        <taxon>Pseudomonadati</taxon>
        <taxon>Pseudomonadota</taxon>
        <taxon>Gammaproteobacteria</taxon>
        <taxon>Enterobacterales</taxon>
        <taxon>Enterobacteriaceae</taxon>
        <taxon>ant endosymbionts</taxon>
        <taxon>Candidatus Blochmanniella</taxon>
    </lineage>
</organism>
<sequence length="103" mass="11677">MIPGELHIADGIIELNVNREKVIVMVINNGDRPIQVGSHFHFYEVNNALFFNRNFALGFRLNVPSGTSIRFEPGQTREVELVRYSGELKIVGFCKKIMGKLSK</sequence>
<name>URE2_BLOFL</name>